<accession>A7TLL0</accession>
<dbReference type="EMBL" id="DS480416">
    <property type="protein sequence ID" value="EDO16802.1"/>
    <property type="molecule type" value="Genomic_DNA"/>
</dbReference>
<dbReference type="RefSeq" id="XP_001644660.1">
    <property type="nucleotide sequence ID" value="XM_001644610.1"/>
</dbReference>
<dbReference type="SMR" id="A7TLL0"/>
<dbReference type="FunCoup" id="A7TLL0">
    <property type="interactions" value="46"/>
</dbReference>
<dbReference type="STRING" id="436907.A7TLL0"/>
<dbReference type="GeneID" id="5545027"/>
<dbReference type="KEGG" id="vpo:Kpol_1056p2"/>
<dbReference type="eggNOG" id="ENOG502S8B7">
    <property type="taxonomic scope" value="Eukaryota"/>
</dbReference>
<dbReference type="HOGENOM" id="CLU_168467_0_0_1"/>
<dbReference type="InParanoid" id="A7TLL0"/>
<dbReference type="OMA" id="AVANHEW"/>
<dbReference type="OrthoDB" id="4059150at2759"/>
<dbReference type="PhylomeDB" id="A7TLL0"/>
<dbReference type="Proteomes" id="UP000000267">
    <property type="component" value="Unassembled WGS sequence"/>
</dbReference>
<dbReference type="GO" id="GO:0031083">
    <property type="term" value="C:BLOC-1 complex"/>
    <property type="evidence" value="ECO:0007669"/>
    <property type="project" value="EnsemblFungi"/>
</dbReference>
<dbReference type="GO" id="GO:0005768">
    <property type="term" value="C:endosome"/>
    <property type="evidence" value="ECO:0007669"/>
    <property type="project" value="UniProtKB-SubCell"/>
</dbReference>
<dbReference type="GO" id="GO:0007032">
    <property type="term" value="P:endosome organization"/>
    <property type="evidence" value="ECO:0007669"/>
    <property type="project" value="EnsemblFungi"/>
</dbReference>
<dbReference type="GO" id="GO:0032880">
    <property type="term" value="P:regulation of protein localization"/>
    <property type="evidence" value="ECO:0007669"/>
    <property type="project" value="EnsemblFungi"/>
</dbReference>
<dbReference type="InterPro" id="IPR020491">
    <property type="entry name" value="BLI1"/>
</dbReference>
<dbReference type="Pfam" id="PF17324">
    <property type="entry name" value="BLI1"/>
    <property type="match status" value="1"/>
</dbReference>
<protein>
    <recommendedName>
        <fullName>Biogenesis of lysosome-related organelles complex 1 subunit BLI1</fullName>
        <shortName>BLOC-1 subunit BLI1</shortName>
    </recommendedName>
    <alternativeName>
        <fullName>BLOC-1 interactor 1</fullName>
    </alternativeName>
</protein>
<comment type="function">
    <text evidence="1">Component of the biogenesis of lysosome-related organelles complex-1 (BLOC-1) involved in endosomal cargo sorting.</text>
</comment>
<comment type="subunit">
    <text evidence="1">Component of the biogenesis of lysosome-related organelles complex-1 (BLOC-1).</text>
</comment>
<comment type="subcellular location">
    <subcellularLocation>
        <location evidence="1">Endosome</location>
    </subcellularLocation>
</comment>
<comment type="similarity">
    <text evidence="3">Belongs to the BLI1 family.</text>
</comment>
<feature type="chain" id="PRO_0000410616" description="Biogenesis of lysosome-related organelles complex 1 subunit BLI1">
    <location>
        <begin position="1"/>
        <end position="116"/>
    </location>
</feature>
<feature type="coiled-coil region" evidence="2">
    <location>
        <begin position="57"/>
        <end position="97"/>
    </location>
</feature>
<evidence type="ECO:0000250" key="1"/>
<evidence type="ECO:0000255" key="2"/>
<evidence type="ECO:0000305" key="3"/>
<proteinExistence type="inferred from homology"/>
<name>BLI1_VANPO</name>
<keyword id="KW-0175">Coiled coil</keyword>
<keyword id="KW-0967">Endosome</keyword>
<keyword id="KW-1185">Reference proteome</keyword>
<keyword id="KW-0813">Transport</keyword>
<gene>
    <name type="primary">BLI1</name>
    <name type="ORF">Kpol_1056p2</name>
</gene>
<organism>
    <name type="scientific">Vanderwaltozyma polyspora (strain ATCC 22028 / DSM 70294 / BCRC 21397 / CBS 2163 / NBRC 10782 / NRRL Y-8283 / UCD 57-17)</name>
    <name type="common">Kluyveromyces polysporus</name>
    <dbReference type="NCBI Taxonomy" id="436907"/>
    <lineage>
        <taxon>Eukaryota</taxon>
        <taxon>Fungi</taxon>
        <taxon>Dikarya</taxon>
        <taxon>Ascomycota</taxon>
        <taxon>Saccharomycotina</taxon>
        <taxon>Saccharomycetes</taxon>
        <taxon>Saccharomycetales</taxon>
        <taxon>Saccharomycetaceae</taxon>
        <taxon>Vanderwaltozyma</taxon>
    </lineage>
</organism>
<reference key="1">
    <citation type="journal article" date="2007" name="Proc. Natl. Acad. Sci. U.S.A.">
        <title>Independent sorting-out of thousands of duplicated gene pairs in two yeast species descended from a whole-genome duplication.</title>
        <authorList>
            <person name="Scannell D.R."/>
            <person name="Frank A.C."/>
            <person name="Conant G.C."/>
            <person name="Byrne K.P."/>
            <person name="Woolfit M."/>
            <person name="Wolfe K.H."/>
        </authorList>
    </citation>
    <scope>NUCLEOTIDE SEQUENCE [LARGE SCALE GENOMIC DNA]</scope>
    <source>
        <strain>ATCC 22028 / DSM 70294 / BCRC 21397 / CBS 2163 / NBRC 10782 / NRRL Y-8283 / UCD 57-17</strain>
    </source>
</reference>
<sequence length="116" mass="13743">MREQERKLSNGIEHCLSKTQEYVDMESAKAISIFSSKVNSNGRWLAEISGKYELKESGELEAFRLLKEDHVKMLDQLEGKIEYYEKLLDELTEFTSEIEIKRKIEKNRRSRHFNNV</sequence>